<name>CITD_STRP8</name>
<evidence type="ECO:0000255" key="1">
    <source>
        <dbReference type="HAMAP-Rule" id="MF_00805"/>
    </source>
</evidence>
<proteinExistence type="inferred from homology"/>
<reference key="1">
    <citation type="journal article" date="2002" name="Proc. Natl. Acad. Sci. U.S.A.">
        <title>Genome sequence and comparative microarray analysis of serotype M18 group A Streptococcus strains associated with acute rheumatic fever outbreaks.</title>
        <authorList>
            <person name="Smoot J.C."/>
            <person name="Barbian K.D."/>
            <person name="Van Gompel J.J."/>
            <person name="Smoot L.M."/>
            <person name="Chaussee M.S."/>
            <person name="Sylva G.L."/>
            <person name="Sturdevant D.E."/>
            <person name="Ricklefs S.M."/>
            <person name="Porcella S.F."/>
            <person name="Parkins L.D."/>
            <person name="Beres S.B."/>
            <person name="Campbell D.S."/>
            <person name="Smith T.M."/>
            <person name="Zhang Q."/>
            <person name="Kapur V."/>
            <person name="Daly J.A."/>
            <person name="Veasy L.G."/>
            <person name="Musser J.M."/>
        </authorList>
    </citation>
    <scope>NUCLEOTIDE SEQUENCE [LARGE SCALE GENOMIC DNA]</scope>
    <source>
        <strain>MGAS8232</strain>
    </source>
</reference>
<gene>
    <name evidence="1" type="primary">citD</name>
    <name type="ordered locus">spyM18_1137</name>
</gene>
<comment type="function">
    <text evidence="1">Covalent carrier of the coenzyme of citrate lyase.</text>
</comment>
<comment type="subunit">
    <text evidence="1">Oligomer with a subunit composition of (alpha,beta,gamma)6.</text>
</comment>
<comment type="subcellular location">
    <subcellularLocation>
        <location evidence="1">Cytoplasm</location>
    </subcellularLocation>
</comment>
<comment type="similarity">
    <text evidence="1">Belongs to the CitD family.</text>
</comment>
<keyword id="KW-0963">Cytoplasm</keyword>
<keyword id="KW-0597">Phosphoprotein</keyword>
<accession>Q8P0Z5</accession>
<sequence>MDIKQTAVAGSLESSDLMITVSPNDEQTITITLDSSVEKQFGNHIRQLIHQTLVNLKVTAAKVEAVDKGALDCTIQARTIAAVHRAAGVDQYDWKEIDSWNV</sequence>
<feature type="chain" id="PRO_0000214716" description="Citrate lyase acyl carrier protein">
    <location>
        <begin position="1"/>
        <end position="102"/>
    </location>
</feature>
<feature type="modified residue" description="O-(phosphoribosyl dephospho-coenzyme A)serine" evidence="1">
    <location>
        <position position="14"/>
    </location>
</feature>
<protein>
    <recommendedName>
        <fullName evidence="1">Citrate lyase acyl carrier protein</fullName>
    </recommendedName>
    <alternativeName>
        <fullName evidence="1">Citrate lyase gamma chain</fullName>
    </alternativeName>
</protein>
<organism>
    <name type="scientific">Streptococcus pyogenes serotype M18 (strain MGAS8232)</name>
    <dbReference type="NCBI Taxonomy" id="186103"/>
    <lineage>
        <taxon>Bacteria</taxon>
        <taxon>Bacillati</taxon>
        <taxon>Bacillota</taxon>
        <taxon>Bacilli</taxon>
        <taxon>Lactobacillales</taxon>
        <taxon>Streptococcaceae</taxon>
        <taxon>Streptococcus</taxon>
    </lineage>
</organism>
<dbReference type="EMBL" id="AE009949">
    <property type="protein sequence ID" value="AAL97758.1"/>
    <property type="molecule type" value="Genomic_DNA"/>
</dbReference>
<dbReference type="RefSeq" id="WP_011017784.1">
    <property type="nucleotide sequence ID" value="NC_003485.1"/>
</dbReference>
<dbReference type="SMR" id="Q8P0Z5"/>
<dbReference type="KEGG" id="spm:spyM18_1137"/>
<dbReference type="HOGENOM" id="CLU_158489_0_0_9"/>
<dbReference type="GO" id="GO:0005737">
    <property type="term" value="C:cytoplasm"/>
    <property type="evidence" value="ECO:0007669"/>
    <property type="project" value="UniProtKB-SubCell"/>
</dbReference>
<dbReference type="HAMAP" id="MF_00805">
    <property type="entry name" value="CitD"/>
    <property type="match status" value="1"/>
</dbReference>
<dbReference type="InterPro" id="IPR006495">
    <property type="entry name" value="CitD"/>
</dbReference>
<dbReference type="InterPro" id="IPR023439">
    <property type="entry name" value="Mal_deCO2ase/Cit_lyase_ACP"/>
</dbReference>
<dbReference type="NCBIfam" id="TIGR01608">
    <property type="entry name" value="citD"/>
    <property type="match status" value="1"/>
</dbReference>
<dbReference type="NCBIfam" id="NF009726">
    <property type="entry name" value="PRK13253.1"/>
    <property type="match status" value="1"/>
</dbReference>
<dbReference type="Pfam" id="PF06857">
    <property type="entry name" value="ACP"/>
    <property type="match status" value="1"/>
</dbReference>
<dbReference type="PIRSF" id="PIRSF002736">
    <property type="entry name" value="Citrt_lyas_gamma"/>
    <property type="match status" value="1"/>
</dbReference>